<proteinExistence type="evidence at protein level"/>
<feature type="signal peptide" evidence="1">
    <location>
        <begin position="1"/>
        <end position="21"/>
    </location>
</feature>
<feature type="chain" id="PRO_0000017426" description="Lithostathine-1">
    <location>
        <begin position="22"/>
        <end position="165"/>
    </location>
</feature>
<feature type="domain" description="C-type lectin" evidence="4">
    <location>
        <begin position="33"/>
        <end position="163"/>
    </location>
</feature>
<feature type="modified residue" description="Pyrrolidone carboxylic acid" evidence="2">
    <location>
        <position position="22"/>
    </location>
</feature>
<feature type="glycosylation site" description="N-linked (GlcNAc...) asparagine" evidence="3">
    <location>
        <position position="129"/>
    </location>
</feature>
<feature type="disulfide bond" evidence="4">
    <location>
        <begin position="35"/>
        <end position="46"/>
    </location>
</feature>
<feature type="disulfide bond" evidence="4">
    <location>
        <begin position="63"/>
        <end position="161"/>
    </location>
</feature>
<feature type="disulfide bond" evidence="4">
    <location>
        <begin position="136"/>
        <end position="153"/>
    </location>
</feature>
<name>LIT1_MOUSE</name>
<comment type="function">
    <text>Might act as an inhibitor of spontaneous calcium carbonate precipitation.</text>
</comment>
<comment type="subcellular location">
    <subcellularLocation>
        <location evidence="1">Secreted</location>
    </subcellularLocation>
</comment>
<comment type="tissue specificity">
    <text>Expressed only in regenerating islets and normal exocrine pancreas, but not in normal pancreatic islets. Expressed strongly in pancreas, moderately in gall bladder, and weakly in liver.</text>
</comment>
<comment type="online information" name="Functional Glycomics Gateway - Glycan Binding">
    <link uri="http://www.functionalglycomics.org/glycomics/GBPServlet?&amp;operationType=view&amp;cbpId=cbp_mou_Ctlect_182"/>
    <text>Litho/Reg 1alpha</text>
</comment>
<evidence type="ECO:0000250" key="1"/>
<evidence type="ECO:0000250" key="2">
    <source>
        <dbReference type="UniProtKB" id="P05451"/>
    </source>
</evidence>
<evidence type="ECO:0000255" key="3"/>
<evidence type="ECO:0000255" key="4">
    <source>
        <dbReference type="PROSITE-ProRule" id="PRU00040"/>
    </source>
</evidence>
<dbReference type="EMBL" id="D14010">
    <property type="protein sequence ID" value="BAA03111.1"/>
    <property type="molecule type" value="Genomic_DNA"/>
</dbReference>
<dbReference type="EMBL" id="BC028761">
    <property type="protein sequence ID" value="AAH28761.1"/>
    <property type="molecule type" value="mRNA"/>
</dbReference>
<dbReference type="CCDS" id="CCDS20257.1"/>
<dbReference type="PIR" id="A47148">
    <property type="entry name" value="A47148"/>
</dbReference>
<dbReference type="RefSeq" id="NP_033068.1">
    <property type="nucleotide sequence ID" value="NM_009042.2"/>
</dbReference>
<dbReference type="SMR" id="P43137"/>
<dbReference type="BioGRID" id="202848">
    <property type="interactions" value="5"/>
</dbReference>
<dbReference type="FunCoup" id="P43137">
    <property type="interactions" value="11"/>
</dbReference>
<dbReference type="STRING" id="10090.ENSMUSP00000145161"/>
<dbReference type="GlyCosmos" id="P43137">
    <property type="glycosylation" value="1 site, No reported glycans"/>
</dbReference>
<dbReference type="GlyGen" id="P43137">
    <property type="glycosylation" value="1 site"/>
</dbReference>
<dbReference type="iPTMnet" id="P43137"/>
<dbReference type="PhosphoSitePlus" id="P43137"/>
<dbReference type="jPOST" id="P43137"/>
<dbReference type="PaxDb" id="10090-ENSMUSP00000078847"/>
<dbReference type="PeptideAtlas" id="P43137"/>
<dbReference type="ProteomicsDB" id="292264"/>
<dbReference type="DNASU" id="19692"/>
<dbReference type="Ensembl" id="ENSMUST00000079926.6">
    <property type="protein sequence ID" value="ENSMUSP00000078847.6"/>
    <property type="gene ID" value="ENSMUSG00000059654.8"/>
</dbReference>
<dbReference type="Ensembl" id="ENSMUST00000204601.3">
    <property type="protein sequence ID" value="ENSMUSP00000144840.2"/>
    <property type="gene ID" value="ENSMUSG00000059654.8"/>
</dbReference>
<dbReference type="Ensembl" id="ENSMUST00000204687.3">
    <property type="protein sequence ID" value="ENSMUSP00000145161.2"/>
    <property type="gene ID" value="ENSMUSG00000059654.8"/>
</dbReference>
<dbReference type="GeneID" id="19692"/>
<dbReference type="KEGG" id="mmu:19692"/>
<dbReference type="UCSC" id="uc009cka.1">
    <property type="organism name" value="mouse"/>
</dbReference>
<dbReference type="AGR" id="MGI:97895"/>
<dbReference type="CTD" id="19692"/>
<dbReference type="MGI" id="MGI:97895">
    <property type="gene designation" value="Reg1"/>
</dbReference>
<dbReference type="VEuPathDB" id="HostDB:ENSMUSG00000059654"/>
<dbReference type="eggNOG" id="KOG4297">
    <property type="taxonomic scope" value="Eukaryota"/>
</dbReference>
<dbReference type="GeneTree" id="ENSGT00940000162393"/>
<dbReference type="HOGENOM" id="CLU_049894_18_0_1"/>
<dbReference type="InParanoid" id="P43137"/>
<dbReference type="OMA" id="KENWFNA"/>
<dbReference type="OrthoDB" id="441660at2759"/>
<dbReference type="PhylomeDB" id="P43137"/>
<dbReference type="BioGRID-ORCS" id="19692">
    <property type="hits" value="1 hit in 80 CRISPR screens"/>
</dbReference>
<dbReference type="ChiTaRS" id="Reg1">
    <property type="organism name" value="mouse"/>
</dbReference>
<dbReference type="PRO" id="PR:P43137"/>
<dbReference type="Proteomes" id="UP000000589">
    <property type="component" value="Chromosome 6"/>
</dbReference>
<dbReference type="RNAct" id="P43137">
    <property type="molecule type" value="protein"/>
</dbReference>
<dbReference type="Bgee" id="ENSMUSG00000059654">
    <property type="expression patterns" value="Expressed in duodenum and 43 other cell types or tissues"/>
</dbReference>
<dbReference type="ExpressionAtlas" id="P43137">
    <property type="expression patterns" value="baseline and differential"/>
</dbReference>
<dbReference type="GO" id="GO:0045178">
    <property type="term" value="C:basal part of cell"/>
    <property type="evidence" value="ECO:0007669"/>
    <property type="project" value="Ensembl"/>
</dbReference>
<dbReference type="GO" id="GO:0062023">
    <property type="term" value="C:collagen-containing extracellular matrix"/>
    <property type="evidence" value="ECO:0007005"/>
    <property type="project" value="BHF-UCL"/>
</dbReference>
<dbReference type="GO" id="GO:0032590">
    <property type="term" value="C:dendrite membrane"/>
    <property type="evidence" value="ECO:0007669"/>
    <property type="project" value="Ensembl"/>
</dbReference>
<dbReference type="GO" id="GO:0005615">
    <property type="term" value="C:extracellular space"/>
    <property type="evidence" value="ECO:0007669"/>
    <property type="project" value="Ensembl"/>
</dbReference>
<dbReference type="GO" id="GO:0030426">
    <property type="term" value="C:growth cone"/>
    <property type="evidence" value="ECO:0007669"/>
    <property type="project" value="Ensembl"/>
</dbReference>
<dbReference type="GO" id="GO:0032809">
    <property type="term" value="C:neuronal cell body membrane"/>
    <property type="evidence" value="ECO:0007669"/>
    <property type="project" value="Ensembl"/>
</dbReference>
<dbReference type="GO" id="GO:0048471">
    <property type="term" value="C:perinuclear region of cytoplasm"/>
    <property type="evidence" value="ECO:0007669"/>
    <property type="project" value="Ensembl"/>
</dbReference>
<dbReference type="GO" id="GO:0032991">
    <property type="term" value="C:protein-containing complex"/>
    <property type="evidence" value="ECO:0007669"/>
    <property type="project" value="Ensembl"/>
</dbReference>
<dbReference type="GO" id="GO:0042588">
    <property type="term" value="C:zymogen granule"/>
    <property type="evidence" value="ECO:0007669"/>
    <property type="project" value="Ensembl"/>
</dbReference>
<dbReference type="GO" id="GO:0030246">
    <property type="term" value="F:carbohydrate binding"/>
    <property type="evidence" value="ECO:0007669"/>
    <property type="project" value="UniProtKB-KW"/>
</dbReference>
<dbReference type="GO" id="GO:0008083">
    <property type="term" value="F:growth factor activity"/>
    <property type="evidence" value="ECO:0000266"/>
    <property type="project" value="MGI"/>
</dbReference>
<dbReference type="GO" id="GO:0042802">
    <property type="term" value="F:identical protein binding"/>
    <property type="evidence" value="ECO:0007669"/>
    <property type="project" value="Ensembl"/>
</dbReference>
<dbReference type="GO" id="GO:0019903">
    <property type="term" value="F:protein phosphatase binding"/>
    <property type="evidence" value="ECO:0007669"/>
    <property type="project" value="Ensembl"/>
</dbReference>
<dbReference type="GO" id="GO:1990869">
    <property type="term" value="P:cellular response to chemokine"/>
    <property type="evidence" value="ECO:0007669"/>
    <property type="project" value="Ensembl"/>
</dbReference>
<dbReference type="GO" id="GO:1990878">
    <property type="term" value="P:cellular response to gastrin"/>
    <property type="evidence" value="ECO:0007669"/>
    <property type="project" value="Ensembl"/>
</dbReference>
<dbReference type="GO" id="GO:0010467">
    <property type="term" value="P:gene expression"/>
    <property type="evidence" value="ECO:0000315"/>
    <property type="project" value="MGI"/>
</dbReference>
<dbReference type="GO" id="GO:0097421">
    <property type="term" value="P:liver regeneration"/>
    <property type="evidence" value="ECO:0007669"/>
    <property type="project" value="Ensembl"/>
</dbReference>
<dbReference type="GO" id="GO:0007494">
    <property type="term" value="P:midgut development"/>
    <property type="evidence" value="ECO:0007669"/>
    <property type="project" value="Ensembl"/>
</dbReference>
<dbReference type="GO" id="GO:0008285">
    <property type="term" value="P:negative regulation of cell population proliferation"/>
    <property type="evidence" value="ECO:0007669"/>
    <property type="project" value="Ensembl"/>
</dbReference>
<dbReference type="GO" id="GO:1990798">
    <property type="term" value="P:pancreas regeneration"/>
    <property type="evidence" value="ECO:0000315"/>
    <property type="project" value="MGI"/>
</dbReference>
<dbReference type="GO" id="GO:0043491">
    <property type="term" value="P:phosphatidylinositol 3-kinase/protein kinase B signal transduction"/>
    <property type="evidence" value="ECO:0000315"/>
    <property type="project" value="MGI"/>
</dbReference>
<dbReference type="GO" id="GO:1904699">
    <property type="term" value="P:positive regulation of acinar cell proliferation"/>
    <property type="evidence" value="ECO:0007669"/>
    <property type="project" value="Ensembl"/>
</dbReference>
<dbReference type="GO" id="GO:1903861">
    <property type="term" value="P:positive regulation of dendrite extension"/>
    <property type="evidence" value="ECO:0007669"/>
    <property type="project" value="Ensembl"/>
</dbReference>
<dbReference type="GO" id="GO:0010628">
    <property type="term" value="P:positive regulation of gene expression"/>
    <property type="evidence" value="ECO:0007669"/>
    <property type="project" value="Ensembl"/>
</dbReference>
<dbReference type="GO" id="GO:1904692">
    <property type="term" value="P:positive regulation of type B pancreatic cell proliferation"/>
    <property type="evidence" value="ECO:0007669"/>
    <property type="project" value="Ensembl"/>
</dbReference>
<dbReference type="GO" id="GO:1990864">
    <property type="term" value="P:response to growth hormone-releasing hormone"/>
    <property type="evidence" value="ECO:0007669"/>
    <property type="project" value="Ensembl"/>
</dbReference>
<dbReference type="GO" id="GO:0001666">
    <property type="term" value="P:response to hypoxia"/>
    <property type="evidence" value="ECO:0007669"/>
    <property type="project" value="Ensembl"/>
</dbReference>
<dbReference type="GO" id="GO:0031667">
    <property type="term" value="P:response to nutrient levels"/>
    <property type="evidence" value="ECO:0007669"/>
    <property type="project" value="Ensembl"/>
</dbReference>
<dbReference type="GO" id="GO:1990785">
    <property type="term" value="P:response to water-immersion restraint stress"/>
    <property type="evidence" value="ECO:0007669"/>
    <property type="project" value="Ensembl"/>
</dbReference>
<dbReference type="GO" id="GO:0003309">
    <property type="term" value="P:type B pancreatic cell differentiation"/>
    <property type="evidence" value="ECO:0000315"/>
    <property type="project" value="MGI"/>
</dbReference>
<dbReference type="FunFam" id="3.10.100.10:FF:000059">
    <property type="entry name" value="Regenerating islet-derived 1"/>
    <property type="match status" value="1"/>
</dbReference>
<dbReference type="Gene3D" id="3.10.100.10">
    <property type="entry name" value="Mannose-Binding Protein A, subunit A"/>
    <property type="match status" value="1"/>
</dbReference>
<dbReference type="InterPro" id="IPR001304">
    <property type="entry name" value="C-type_lectin-like"/>
</dbReference>
<dbReference type="InterPro" id="IPR016186">
    <property type="entry name" value="C-type_lectin-like/link_sf"/>
</dbReference>
<dbReference type="InterPro" id="IPR050111">
    <property type="entry name" value="C-type_lectin/snaclec_domain"/>
</dbReference>
<dbReference type="InterPro" id="IPR018378">
    <property type="entry name" value="C-type_lectin_CS"/>
</dbReference>
<dbReference type="InterPro" id="IPR016187">
    <property type="entry name" value="CTDL_fold"/>
</dbReference>
<dbReference type="PANTHER" id="PTHR22803">
    <property type="entry name" value="MANNOSE, PHOSPHOLIPASE, LECTIN RECEPTOR RELATED"/>
    <property type="match status" value="1"/>
</dbReference>
<dbReference type="Pfam" id="PF00059">
    <property type="entry name" value="Lectin_C"/>
    <property type="match status" value="1"/>
</dbReference>
<dbReference type="PRINTS" id="PR01504">
    <property type="entry name" value="PNCREATITSAP"/>
</dbReference>
<dbReference type="SMART" id="SM00034">
    <property type="entry name" value="CLECT"/>
    <property type="match status" value="1"/>
</dbReference>
<dbReference type="SUPFAM" id="SSF56436">
    <property type="entry name" value="C-type lectin-like"/>
    <property type="match status" value="1"/>
</dbReference>
<dbReference type="PROSITE" id="PS00615">
    <property type="entry name" value="C_TYPE_LECTIN_1"/>
    <property type="match status" value="1"/>
</dbReference>
<dbReference type="PROSITE" id="PS50041">
    <property type="entry name" value="C_TYPE_LECTIN_2"/>
    <property type="match status" value="1"/>
</dbReference>
<protein>
    <recommendedName>
        <fullName>Lithostathine-1</fullName>
    </recommendedName>
    <alternativeName>
        <fullName>Islet of Langerhans regenerating protein 1</fullName>
        <shortName>REG 1</shortName>
    </alternativeName>
    <alternativeName>
        <fullName>Pancreatic stone protein 1</fullName>
        <shortName>PSP</shortName>
    </alternativeName>
    <alternativeName>
        <fullName>Pancreatic thread protein 1</fullName>
        <shortName>PTP</shortName>
    </alternativeName>
    <alternativeName>
        <fullName>Regenerating protein 1</fullName>
    </alternativeName>
</protein>
<organism>
    <name type="scientific">Mus musculus</name>
    <name type="common">Mouse</name>
    <dbReference type="NCBI Taxonomy" id="10090"/>
    <lineage>
        <taxon>Eukaryota</taxon>
        <taxon>Metazoa</taxon>
        <taxon>Chordata</taxon>
        <taxon>Craniata</taxon>
        <taxon>Vertebrata</taxon>
        <taxon>Euteleostomi</taxon>
        <taxon>Mammalia</taxon>
        <taxon>Eutheria</taxon>
        <taxon>Euarchontoglires</taxon>
        <taxon>Glires</taxon>
        <taxon>Rodentia</taxon>
        <taxon>Myomorpha</taxon>
        <taxon>Muroidea</taxon>
        <taxon>Muridae</taxon>
        <taxon>Murinae</taxon>
        <taxon>Mus</taxon>
        <taxon>Mus</taxon>
    </lineage>
</organism>
<gene>
    <name type="primary">Reg1</name>
</gene>
<reference key="1">
    <citation type="journal article" date="1993" name="J. Biol. Chem.">
        <title>Structure, chromosomal localization, and expression of mouse reg genes, reg I and reg II. A novel type of reg gene, reg II, exists in the mouse genome.</title>
        <authorList>
            <person name="Unno M."/>
            <person name="Yonekura H."/>
            <person name="Nakagawara K."/>
            <person name="Watanabe T."/>
            <person name="Miyashita H."/>
            <person name="Moriizumi S."/>
            <person name="Okamoto H."/>
            <person name="Itoh T."/>
            <person name="Teraoka H."/>
        </authorList>
    </citation>
    <scope>NUCLEOTIDE SEQUENCE [GENOMIC DNA]</scope>
    <source>
        <strain>C57BL/6J</strain>
    </source>
</reference>
<reference key="2">
    <citation type="journal article" date="2004" name="Genome Res.">
        <title>The status, quality, and expansion of the NIH full-length cDNA project: the Mammalian Gene Collection (MGC).</title>
        <authorList>
            <consortium name="The MGC Project Team"/>
        </authorList>
    </citation>
    <scope>NUCLEOTIDE SEQUENCE [LARGE SCALE MRNA]</scope>
    <source>
        <strain>C57BL/6J</strain>
        <tissue>Thymus</tissue>
    </source>
</reference>
<reference key="3">
    <citation type="journal article" date="2010" name="Cell">
        <title>A tissue-specific atlas of mouse protein phosphorylation and expression.</title>
        <authorList>
            <person name="Huttlin E.L."/>
            <person name="Jedrychowski M.P."/>
            <person name="Elias J.E."/>
            <person name="Goswami T."/>
            <person name="Rad R."/>
            <person name="Beausoleil S.A."/>
            <person name="Villen J."/>
            <person name="Haas W."/>
            <person name="Sowa M.E."/>
            <person name="Gygi S.P."/>
        </authorList>
    </citation>
    <scope>IDENTIFICATION BY MASS SPECTROMETRY [LARGE SCALE ANALYSIS]</scope>
    <source>
        <tissue>Lung</tissue>
        <tissue>Pancreas</tissue>
        <tissue>Spleen</tissue>
    </source>
</reference>
<keyword id="KW-1015">Disulfide bond</keyword>
<keyword id="KW-0325">Glycoprotein</keyword>
<keyword id="KW-0430">Lectin</keyword>
<keyword id="KW-0873">Pyrrolidone carboxylic acid</keyword>
<keyword id="KW-1185">Reference proteome</keyword>
<keyword id="KW-0964">Secreted</keyword>
<keyword id="KW-0732">Signal</keyword>
<sequence length="165" mass="18519">MARNAYFILLSCLIVLSPSQGQEAEEDLPSARISCPEGSNAYSSYCYYFTEDRLTWADADLFCQNMNSGYLVSVLSQAEGNFVASLIKESGTTDANVWTGLHDPKRNRRWHWSSGSLFLYKSWATGSPNSSNRGYCVSLTSNTGYKKWKDDNCDAQYSFVCKFKG</sequence>
<accession>P43137</accession>